<sequence length="396" mass="45016">MYKVILIRYGEIALKGQNRHVFINKLIENIKESLKGVGEYKLKKTLGRIYVFPNDNINQFIEKLKMVPGIVSLSPTAVCPLDFDSLKETSVKVLKDAINDYPATFKVETRRANKQFPYKSPEVSREIGAHLLRSINTPDHNILTVDVHNPRYTLKIEIRKKNIYVFTRSISGPGGLPVGSSGKGLLLLSGGIDSPVAGWLAMKRGIELEALYFHSFPYTSDRAKEKVIDLTKVLSRYCKKIKLYVGYFTDIQRAIQENCPQKYYITIMRRMMYRMAERIARKNGDLVLITGESVGQVASQTLESMNVINEVTNMPVLRPLATMNKTEIMDLAREIGTYDISILPHEDCCTIFVPRHPVTRPRLDRTLKAEEKLKAEIDGLLEDAIEKTEILEIKHG</sequence>
<feature type="chain" id="PRO_1000196927" description="Probable tRNA sulfurtransferase">
    <location>
        <begin position="1"/>
        <end position="396"/>
    </location>
</feature>
<feature type="domain" description="THUMP" evidence="1">
    <location>
        <begin position="58"/>
        <end position="169"/>
    </location>
</feature>
<feature type="binding site" evidence="1">
    <location>
        <begin position="187"/>
        <end position="188"/>
    </location>
    <ligand>
        <name>ATP</name>
        <dbReference type="ChEBI" id="CHEBI:30616"/>
    </ligand>
</feature>
<feature type="binding site" evidence="1">
    <location>
        <begin position="212"/>
        <end position="213"/>
    </location>
    <ligand>
        <name>ATP</name>
        <dbReference type="ChEBI" id="CHEBI:30616"/>
    </ligand>
</feature>
<feature type="binding site" evidence="1">
    <location>
        <position position="269"/>
    </location>
    <ligand>
        <name>ATP</name>
        <dbReference type="ChEBI" id="CHEBI:30616"/>
    </ligand>
</feature>
<feature type="binding site" evidence="1">
    <location>
        <position position="291"/>
    </location>
    <ligand>
        <name>ATP</name>
        <dbReference type="ChEBI" id="CHEBI:30616"/>
    </ligand>
</feature>
<feature type="binding site" evidence="1">
    <location>
        <position position="300"/>
    </location>
    <ligand>
        <name>ATP</name>
        <dbReference type="ChEBI" id="CHEBI:30616"/>
    </ligand>
</feature>
<accession>B8D0L5</accession>
<keyword id="KW-0067">ATP-binding</keyword>
<keyword id="KW-0963">Cytoplasm</keyword>
<keyword id="KW-0547">Nucleotide-binding</keyword>
<keyword id="KW-1185">Reference proteome</keyword>
<keyword id="KW-0694">RNA-binding</keyword>
<keyword id="KW-0784">Thiamine biosynthesis</keyword>
<keyword id="KW-0808">Transferase</keyword>
<keyword id="KW-0820">tRNA-binding</keyword>
<organism>
    <name type="scientific">Halothermothrix orenii (strain H 168 / OCM 544 / DSM 9562)</name>
    <dbReference type="NCBI Taxonomy" id="373903"/>
    <lineage>
        <taxon>Bacteria</taxon>
        <taxon>Bacillati</taxon>
        <taxon>Bacillota</taxon>
        <taxon>Clostridia</taxon>
        <taxon>Halanaerobiales</taxon>
        <taxon>Halothermotrichaceae</taxon>
        <taxon>Halothermothrix</taxon>
    </lineage>
</organism>
<gene>
    <name evidence="1" type="primary">thiI</name>
    <name type="ordered locus">Hore_22060</name>
</gene>
<name>THII_HALOH</name>
<proteinExistence type="inferred from homology"/>
<reference key="1">
    <citation type="journal article" date="2009" name="PLoS ONE">
        <title>Genome analysis of the anaerobic thermohalophilic bacterium Halothermothrix orenii.</title>
        <authorList>
            <person name="Mavromatis K."/>
            <person name="Ivanova N."/>
            <person name="Anderson I."/>
            <person name="Lykidis A."/>
            <person name="Hooper S.D."/>
            <person name="Sun H."/>
            <person name="Kunin V."/>
            <person name="Lapidus A."/>
            <person name="Hugenholtz P."/>
            <person name="Patel B."/>
            <person name="Kyrpides N.C."/>
        </authorList>
    </citation>
    <scope>NUCLEOTIDE SEQUENCE [LARGE SCALE GENOMIC DNA]</scope>
    <source>
        <strain>H 168 / OCM 544 / DSM 9562</strain>
    </source>
</reference>
<dbReference type="EC" id="2.8.1.4" evidence="1"/>
<dbReference type="EMBL" id="CP001098">
    <property type="protein sequence ID" value="ACL70951.1"/>
    <property type="molecule type" value="Genomic_DNA"/>
</dbReference>
<dbReference type="RefSeq" id="WP_015923920.1">
    <property type="nucleotide sequence ID" value="NC_011899.1"/>
</dbReference>
<dbReference type="SMR" id="B8D0L5"/>
<dbReference type="STRING" id="373903.Hore_22060"/>
<dbReference type="KEGG" id="hor:Hore_22060"/>
<dbReference type="eggNOG" id="COG0301">
    <property type="taxonomic scope" value="Bacteria"/>
</dbReference>
<dbReference type="HOGENOM" id="CLU_037952_4_0_9"/>
<dbReference type="OrthoDB" id="9773948at2"/>
<dbReference type="UniPathway" id="UPA00060"/>
<dbReference type="Proteomes" id="UP000000719">
    <property type="component" value="Chromosome"/>
</dbReference>
<dbReference type="GO" id="GO:0005829">
    <property type="term" value="C:cytosol"/>
    <property type="evidence" value="ECO:0007669"/>
    <property type="project" value="TreeGrafter"/>
</dbReference>
<dbReference type="GO" id="GO:0005524">
    <property type="term" value="F:ATP binding"/>
    <property type="evidence" value="ECO:0007669"/>
    <property type="project" value="UniProtKB-UniRule"/>
</dbReference>
<dbReference type="GO" id="GO:0004810">
    <property type="term" value="F:CCA tRNA nucleotidyltransferase activity"/>
    <property type="evidence" value="ECO:0007669"/>
    <property type="project" value="InterPro"/>
</dbReference>
<dbReference type="GO" id="GO:0000049">
    <property type="term" value="F:tRNA binding"/>
    <property type="evidence" value="ECO:0007669"/>
    <property type="project" value="UniProtKB-UniRule"/>
</dbReference>
<dbReference type="GO" id="GO:0140741">
    <property type="term" value="F:tRNA-uracil-4 sulfurtransferase activity"/>
    <property type="evidence" value="ECO:0007669"/>
    <property type="project" value="UniProtKB-EC"/>
</dbReference>
<dbReference type="GO" id="GO:0009228">
    <property type="term" value="P:thiamine biosynthetic process"/>
    <property type="evidence" value="ECO:0007669"/>
    <property type="project" value="UniProtKB-KW"/>
</dbReference>
<dbReference type="GO" id="GO:0009229">
    <property type="term" value="P:thiamine diphosphate biosynthetic process"/>
    <property type="evidence" value="ECO:0007669"/>
    <property type="project" value="UniProtKB-UniRule"/>
</dbReference>
<dbReference type="GO" id="GO:0052837">
    <property type="term" value="P:thiazole biosynthetic process"/>
    <property type="evidence" value="ECO:0007669"/>
    <property type="project" value="TreeGrafter"/>
</dbReference>
<dbReference type="GO" id="GO:0002937">
    <property type="term" value="P:tRNA 4-thiouridine biosynthesis"/>
    <property type="evidence" value="ECO:0007669"/>
    <property type="project" value="TreeGrafter"/>
</dbReference>
<dbReference type="CDD" id="cd01712">
    <property type="entry name" value="PPase_ThiI"/>
    <property type="match status" value="1"/>
</dbReference>
<dbReference type="CDD" id="cd11716">
    <property type="entry name" value="THUMP_ThiI"/>
    <property type="match status" value="1"/>
</dbReference>
<dbReference type="FunFam" id="3.40.50.620:FF:000053">
    <property type="entry name" value="Probable tRNA sulfurtransferase"/>
    <property type="match status" value="1"/>
</dbReference>
<dbReference type="Gene3D" id="3.30.2130.30">
    <property type="match status" value="1"/>
</dbReference>
<dbReference type="Gene3D" id="3.40.50.620">
    <property type="entry name" value="HUPs"/>
    <property type="match status" value="1"/>
</dbReference>
<dbReference type="HAMAP" id="MF_00021">
    <property type="entry name" value="ThiI"/>
    <property type="match status" value="1"/>
</dbReference>
<dbReference type="InterPro" id="IPR014729">
    <property type="entry name" value="Rossmann-like_a/b/a_fold"/>
</dbReference>
<dbReference type="InterPro" id="IPR020536">
    <property type="entry name" value="ThiI_AANH"/>
</dbReference>
<dbReference type="InterPro" id="IPR054173">
    <property type="entry name" value="ThiI_fer"/>
</dbReference>
<dbReference type="InterPro" id="IPR049961">
    <property type="entry name" value="ThiI_N"/>
</dbReference>
<dbReference type="InterPro" id="IPR004114">
    <property type="entry name" value="THUMP_dom"/>
</dbReference>
<dbReference type="InterPro" id="IPR049962">
    <property type="entry name" value="THUMP_ThiI"/>
</dbReference>
<dbReference type="InterPro" id="IPR003720">
    <property type="entry name" value="tRNA_STrfase"/>
</dbReference>
<dbReference type="InterPro" id="IPR050102">
    <property type="entry name" value="tRNA_sulfurtransferase_ThiI"/>
</dbReference>
<dbReference type="NCBIfam" id="TIGR00342">
    <property type="entry name" value="tRNA uracil 4-sulfurtransferase ThiI"/>
    <property type="match status" value="1"/>
</dbReference>
<dbReference type="PANTHER" id="PTHR43209">
    <property type="entry name" value="TRNA SULFURTRANSFERASE"/>
    <property type="match status" value="1"/>
</dbReference>
<dbReference type="PANTHER" id="PTHR43209:SF1">
    <property type="entry name" value="TRNA SULFURTRANSFERASE"/>
    <property type="match status" value="1"/>
</dbReference>
<dbReference type="Pfam" id="PF02568">
    <property type="entry name" value="ThiI"/>
    <property type="match status" value="1"/>
</dbReference>
<dbReference type="Pfam" id="PF22025">
    <property type="entry name" value="ThiI_fer"/>
    <property type="match status" value="1"/>
</dbReference>
<dbReference type="Pfam" id="PF02926">
    <property type="entry name" value="THUMP"/>
    <property type="match status" value="1"/>
</dbReference>
<dbReference type="SMART" id="SM00981">
    <property type="entry name" value="THUMP"/>
    <property type="match status" value="1"/>
</dbReference>
<dbReference type="SUPFAM" id="SSF52402">
    <property type="entry name" value="Adenine nucleotide alpha hydrolases-like"/>
    <property type="match status" value="1"/>
</dbReference>
<dbReference type="SUPFAM" id="SSF143437">
    <property type="entry name" value="THUMP domain-like"/>
    <property type="match status" value="1"/>
</dbReference>
<dbReference type="PROSITE" id="PS51165">
    <property type="entry name" value="THUMP"/>
    <property type="match status" value="1"/>
</dbReference>
<protein>
    <recommendedName>
        <fullName evidence="1">Probable tRNA sulfurtransferase</fullName>
        <ecNumber evidence="1">2.8.1.4</ecNumber>
    </recommendedName>
    <alternativeName>
        <fullName evidence="1">Sulfur carrier protein ThiS sulfurtransferase</fullName>
    </alternativeName>
    <alternativeName>
        <fullName evidence="1">Thiamine biosynthesis protein ThiI</fullName>
    </alternativeName>
    <alternativeName>
        <fullName evidence="1">tRNA 4-thiouridine synthase</fullName>
    </alternativeName>
</protein>
<comment type="function">
    <text evidence="1">Catalyzes the ATP-dependent transfer of a sulfur to tRNA to produce 4-thiouridine in position 8 of tRNAs, which functions as a near-UV photosensor. Also catalyzes the transfer of sulfur to the sulfur carrier protein ThiS, forming ThiS-thiocarboxylate. This is a step in the synthesis of thiazole, in the thiamine biosynthesis pathway. The sulfur is donated as persulfide by IscS.</text>
</comment>
<comment type="catalytic activity">
    <reaction evidence="1">
        <text>[ThiI sulfur-carrier protein]-S-sulfanyl-L-cysteine + a uridine in tRNA + 2 reduced [2Fe-2S]-[ferredoxin] + ATP + H(+) = [ThiI sulfur-carrier protein]-L-cysteine + a 4-thiouridine in tRNA + 2 oxidized [2Fe-2S]-[ferredoxin] + AMP + diphosphate</text>
        <dbReference type="Rhea" id="RHEA:24176"/>
        <dbReference type="Rhea" id="RHEA-COMP:10000"/>
        <dbReference type="Rhea" id="RHEA-COMP:10001"/>
        <dbReference type="Rhea" id="RHEA-COMP:13337"/>
        <dbReference type="Rhea" id="RHEA-COMP:13338"/>
        <dbReference type="Rhea" id="RHEA-COMP:13339"/>
        <dbReference type="Rhea" id="RHEA-COMP:13340"/>
        <dbReference type="ChEBI" id="CHEBI:15378"/>
        <dbReference type="ChEBI" id="CHEBI:29950"/>
        <dbReference type="ChEBI" id="CHEBI:30616"/>
        <dbReference type="ChEBI" id="CHEBI:33019"/>
        <dbReference type="ChEBI" id="CHEBI:33737"/>
        <dbReference type="ChEBI" id="CHEBI:33738"/>
        <dbReference type="ChEBI" id="CHEBI:61963"/>
        <dbReference type="ChEBI" id="CHEBI:65315"/>
        <dbReference type="ChEBI" id="CHEBI:136798"/>
        <dbReference type="ChEBI" id="CHEBI:456215"/>
        <dbReference type="EC" id="2.8.1.4"/>
    </reaction>
</comment>
<comment type="catalytic activity">
    <reaction evidence="1">
        <text>[ThiS sulfur-carrier protein]-C-terminal Gly-Gly-AMP + S-sulfanyl-L-cysteinyl-[cysteine desulfurase] + AH2 = [ThiS sulfur-carrier protein]-C-terminal-Gly-aminoethanethioate + L-cysteinyl-[cysteine desulfurase] + A + AMP + 2 H(+)</text>
        <dbReference type="Rhea" id="RHEA:43340"/>
        <dbReference type="Rhea" id="RHEA-COMP:12157"/>
        <dbReference type="Rhea" id="RHEA-COMP:12158"/>
        <dbReference type="Rhea" id="RHEA-COMP:12910"/>
        <dbReference type="Rhea" id="RHEA-COMP:19908"/>
        <dbReference type="ChEBI" id="CHEBI:13193"/>
        <dbReference type="ChEBI" id="CHEBI:15378"/>
        <dbReference type="ChEBI" id="CHEBI:17499"/>
        <dbReference type="ChEBI" id="CHEBI:29950"/>
        <dbReference type="ChEBI" id="CHEBI:61963"/>
        <dbReference type="ChEBI" id="CHEBI:90618"/>
        <dbReference type="ChEBI" id="CHEBI:232372"/>
        <dbReference type="ChEBI" id="CHEBI:456215"/>
    </reaction>
</comment>
<comment type="pathway">
    <text evidence="1">Cofactor biosynthesis; thiamine diphosphate biosynthesis.</text>
</comment>
<comment type="subcellular location">
    <subcellularLocation>
        <location evidence="1">Cytoplasm</location>
    </subcellularLocation>
</comment>
<comment type="similarity">
    <text evidence="1">Belongs to the ThiI family.</text>
</comment>
<evidence type="ECO:0000255" key="1">
    <source>
        <dbReference type="HAMAP-Rule" id="MF_00021"/>
    </source>
</evidence>